<sequence>MAYHTPFAAQPPVASSGLPLTLISLDDWALVTLTGADRVKYLQGQVTADIDALSADQHVLCAHCDAKGKMWSNLRLFYRGEGLAFIERRSLLDNQLSELKKYAVFSKVVIEPQPDAVLIGVAGSQAKTALAEIFTELPSAEHPVTQMGNSTLLHFSLPAERFLLVTDTEQAQQLVEKLAGRAQFNDSKQWLALDIEAGFPIIDAANSAQFIPQATNIQALNGISFTKGCYTGQEMVARAKYRGANKRALYWLAGNASRVPAAGEDLEWQLGENWRRTGTVLSAIQLNDGTVWVQAVLNNDLAADSVLRVRDDALGTLAIQPLPYSLAEDK</sequence>
<feature type="chain" id="PRO_0000262910" description="tRNA-modifying protein YgfZ">
    <location>
        <begin position="1"/>
        <end position="330"/>
    </location>
</feature>
<feature type="binding site" evidence="1">
    <location>
        <position position="28"/>
    </location>
    <ligand>
        <name>folate</name>
        <dbReference type="ChEBI" id="CHEBI:62501"/>
    </ligand>
</feature>
<feature type="binding site" evidence="1">
    <location>
        <position position="190"/>
    </location>
    <ligand>
        <name>folate</name>
        <dbReference type="ChEBI" id="CHEBI:62501"/>
    </ligand>
</feature>
<reference key="1">
    <citation type="journal article" date="2006" name="J. Bacteriol.">
        <title>Complete genome sequence of Yersinia pestis strains Antiqua and Nepal516: evidence of gene reduction in an emerging pathogen.</title>
        <authorList>
            <person name="Chain P.S.G."/>
            <person name="Hu P."/>
            <person name="Malfatti S.A."/>
            <person name="Radnedge L."/>
            <person name="Larimer F."/>
            <person name="Vergez L.M."/>
            <person name="Worsham P."/>
            <person name="Chu M.C."/>
            <person name="Andersen G.L."/>
        </authorList>
    </citation>
    <scope>NUCLEOTIDE SEQUENCE [LARGE SCALE GENOMIC DNA]</scope>
    <source>
        <strain>Nepal516</strain>
    </source>
</reference>
<reference key="2">
    <citation type="submission" date="2009-04" db="EMBL/GenBank/DDBJ databases">
        <title>Yersinia pestis Nepal516A whole genome shotgun sequencing project.</title>
        <authorList>
            <person name="Plunkett G. III"/>
            <person name="Anderson B.D."/>
            <person name="Baumler D.J."/>
            <person name="Burland V."/>
            <person name="Cabot E.L."/>
            <person name="Glasner J.D."/>
            <person name="Mau B."/>
            <person name="Neeno-Eckwall E."/>
            <person name="Perna N.T."/>
            <person name="Munk A.C."/>
            <person name="Tapia R."/>
            <person name="Green L.D."/>
            <person name="Rogers Y.C."/>
            <person name="Detter J.C."/>
            <person name="Bruce D.C."/>
            <person name="Brettin T.S."/>
        </authorList>
    </citation>
    <scope>NUCLEOTIDE SEQUENCE [LARGE SCALE GENOMIC DNA]</scope>
    <source>
        <strain>Nepal516</strain>
    </source>
</reference>
<protein>
    <recommendedName>
        <fullName evidence="1">tRNA-modifying protein YgfZ</fullName>
    </recommendedName>
</protein>
<gene>
    <name type="ordered locus">YPN_3098</name>
    <name type="ORF">YP516_3513</name>
</gene>
<proteinExistence type="inferred from homology"/>
<dbReference type="EMBL" id="CP000305">
    <property type="protein sequence ID" value="ABG19425.1"/>
    <property type="molecule type" value="Genomic_DNA"/>
</dbReference>
<dbReference type="EMBL" id="ACNQ01000017">
    <property type="protein sequence ID" value="EEO75587.1"/>
    <property type="molecule type" value="Genomic_DNA"/>
</dbReference>
<dbReference type="SMR" id="Q1CF05"/>
<dbReference type="KEGG" id="ypn:YPN_3098"/>
<dbReference type="HOGENOM" id="CLU_007884_6_1_6"/>
<dbReference type="Proteomes" id="UP000008936">
    <property type="component" value="Chromosome"/>
</dbReference>
<dbReference type="GO" id="GO:0005737">
    <property type="term" value="C:cytoplasm"/>
    <property type="evidence" value="ECO:0007669"/>
    <property type="project" value="UniProtKB-SubCell"/>
</dbReference>
<dbReference type="GO" id="GO:0005542">
    <property type="term" value="F:folic acid binding"/>
    <property type="evidence" value="ECO:0007669"/>
    <property type="project" value="UniProtKB-UniRule"/>
</dbReference>
<dbReference type="GO" id="GO:0016226">
    <property type="term" value="P:iron-sulfur cluster assembly"/>
    <property type="evidence" value="ECO:0007669"/>
    <property type="project" value="TreeGrafter"/>
</dbReference>
<dbReference type="GO" id="GO:0009451">
    <property type="term" value="P:RNA modification"/>
    <property type="evidence" value="ECO:0007669"/>
    <property type="project" value="InterPro"/>
</dbReference>
<dbReference type="GO" id="GO:0008033">
    <property type="term" value="P:tRNA processing"/>
    <property type="evidence" value="ECO:0007669"/>
    <property type="project" value="UniProtKB-UniRule"/>
</dbReference>
<dbReference type="FunFam" id="2.40.30.160:FF:000001">
    <property type="entry name" value="tRNA-modifying protein YgfZ"/>
    <property type="match status" value="1"/>
</dbReference>
<dbReference type="FunFam" id="3.30.70.1400:FF:000002">
    <property type="entry name" value="tRNA-modifying protein YgfZ"/>
    <property type="match status" value="1"/>
</dbReference>
<dbReference type="FunFam" id="3.30.70.1630:FF:000001">
    <property type="entry name" value="tRNA-modifying protein YgfZ"/>
    <property type="match status" value="1"/>
</dbReference>
<dbReference type="Gene3D" id="2.40.30.160">
    <property type="match status" value="1"/>
</dbReference>
<dbReference type="Gene3D" id="3.30.70.1630">
    <property type="match status" value="1"/>
</dbReference>
<dbReference type="Gene3D" id="3.30.70.1400">
    <property type="entry name" value="Aminomethyltransferase beta-barrel domains"/>
    <property type="match status" value="1"/>
</dbReference>
<dbReference type="HAMAP" id="MF_01175">
    <property type="entry name" value="tRNA_modifying_YgfZ"/>
    <property type="match status" value="1"/>
</dbReference>
<dbReference type="InterPro" id="IPR029043">
    <property type="entry name" value="GcvT/YgfZ_C"/>
</dbReference>
<dbReference type="InterPro" id="IPR023758">
    <property type="entry name" value="tRNA-modifying_YgfZ"/>
</dbReference>
<dbReference type="InterPro" id="IPR045179">
    <property type="entry name" value="YgfZ/GcvT"/>
</dbReference>
<dbReference type="InterPro" id="IPR017703">
    <property type="entry name" value="YgfZ/GcvT_CS"/>
</dbReference>
<dbReference type="InterPro" id="IPR048451">
    <property type="entry name" value="YgfZ_barrel"/>
</dbReference>
<dbReference type="NCBIfam" id="NF007110">
    <property type="entry name" value="PRK09559.1"/>
    <property type="match status" value="1"/>
</dbReference>
<dbReference type="NCBIfam" id="TIGR03317">
    <property type="entry name" value="ygfZ_signature"/>
    <property type="match status" value="1"/>
</dbReference>
<dbReference type="PANTHER" id="PTHR22602">
    <property type="entry name" value="TRANSFERASE CAF17, MITOCHONDRIAL-RELATED"/>
    <property type="match status" value="1"/>
</dbReference>
<dbReference type="PANTHER" id="PTHR22602:SF0">
    <property type="entry name" value="TRANSFERASE CAF17, MITOCHONDRIAL-RELATED"/>
    <property type="match status" value="1"/>
</dbReference>
<dbReference type="Pfam" id="PF21130">
    <property type="entry name" value="YgfZ_barrel"/>
    <property type="match status" value="1"/>
</dbReference>
<dbReference type="SUPFAM" id="SSF101790">
    <property type="entry name" value="Aminomethyltransferase beta-barrel domain"/>
    <property type="match status" value="1"/>
</dbReference>
<dbReference type="SUPFAM" id="SSF103025">
    <property type="entry name" value="Folate-binding domain"/>
    <property type="match status" value="1"/>
</dbReference>
<comment type="function">
    <text evidence="1">Folate-binding protein involved in regulating the level of ATP-DnaA and in the modification of some tRNAs. It is probably a key factor in regulatory networks that act via tRNA modification, such as initiation of chromosomal replication.</text>
</comment>
<comment type="subcellular location">
    <subcellularLocation>
        <location evidence="1">Cytoplasm</location>
    </subcellularLocation>
</comment>
<comment type="similarity">
    <text evidence="1">Belongs to the tRNA-modifying YgfZ family.</text>
</comment>
<accession>Q1CF05</accession>
<accession>C4GXD7</accession>
<name>YGFZ_YERPN</name>
<keyword id="KW-0963">Cytoplasm</keyword>
<keyword id="KW-0290">Folate-binding</keyword>
<keyword id="KW-0819">tRNA processing</keyword>
<evidence type="ECO:0000255" key="1">
    <source>
        <dbReference type="HAMAP-Rule" id="MF_01175"/>
    </source>
</evidence>
<organism>
    <name type="scientific">Yersinia pestis bv. Antiqua (strain Nepal516)</name>
    <dbReference type="NCBI Taxonomy" id="377628"/>
    <lineage>
        <taxon>Bacteria</taxon>
        <taxon>Pseudomonadati</taxon>
        <taxon>Pseudomonadota</taxon>
        <taxon>Gammaproteobacteria</taxon>
        <taxon>Enterobacterales</taxon>
        <taxon>Yersiniaceae</taxon>
        <taxon>Yersinia</taxon>
    </lineage>
</organism>